<feature type="transit peptide" description="Mitochondrion" evidence="1">
    <location>
        <begin position="1"/>
        <end position="20"/>
    </location>
</feature>
<feature type="chain" id="PRO_0000342760" description="Pentatricopeptide repeat-containing protein At1g07590, mitochondrial">
    <location>
        <begin position="21"/>
        <end position="534"/>
    </location>
</feature>
<feature type="repeat" description="PPR 1">
    <location>
        <begin position="165"/>
        <end position="199"/>
    </location>
</feature>
<feature type="repeat" description="PPR 2">
    <location>
        <begin position="200"/>
        <end position="234"/>
    </location>
</feature>
<feature type="repeat" description="PPR 3">
    <location>
        <begin position="235"/>
        <end position="269"/>
    </location>
</feature>
<feature type="repeat" description="PPR 4">
    <location>
        <begin position="270"/>
        <end position="300"/>
    </location>
</feature>
<feature type="repeat" description="PPR 5">
    <location>
        <begin position="305"/>
        <end position="335"/>
    </location>
</feature>
<feature type="repeat" description="PPR 6">
    <location>
        <begin position="339"/>
        <end position="369"/>
    </location>
</feature>
<feature type="repeat" description="PPR 7">
    <location>
        <begin position="374"/>
        <end position="408"/>
    </location>
</feature>
<feature type="repeat" description="PPR 8">
    <location>
        <begin position="409"/>
        <end position="443"/>
    </location>
</feature>
<feature type="repeat" description="PPR 9">
    <location>
        <begin position="451"/>
        <end position="485"/>
    </location>
</feature>
<keyword id="KW-0496">Mitochondrion</keyword>
<keyword id="KW-1185">Reference proteome</keyword>
<keyword id="KW-0677">Repeat</keyword>
<keyword id="KW-0809">Transit peptide</keyword>
<accession>Q940Q2</accession>
<accession>Q9LNY2</accession>
<name>PPR19_ARATH</name>
<evidence type="ECO:0000255" key="1"/>
<evidence type="ECO:0000305" key="2"/>
<gene>
    <name type="ordered locus">At1g07590</name>
    <name type="ORF">F22G5.3</name>
</gene>
<comment type="subcellular location">
    <subcellularLocation>
        <location evidence="2">Mitochondrion</location>
    </subcellularLocation>
</comment>
<comment type="similarity">
    <text evidence="2">Belongs to the PPR family. P subfamily.</text>
</comment>
<comment type="sequence caution" evidence="2">
    <conflict type="erroneous gene model prediction">
        <sequence resource="EMBL-CDS" id="AAF79544"/>
    </conflict>
</comment>
<comment type="online information" name="Pentatricopeptide repeat proteins">
    <link uri="https://ppr.plantenergy.uwa.edu.au"/>
</comment>
<reference key="1">
    <citation type="journal article" date="2000" name="Nature">
        <title>Sequence and analysis of chromosome 1 of the plant Arabidopsis thaliana.</title>
        <authorList>
            <person name="Theologis A."/>
            <person name="Ecker J.R."/>
            <person name="Palm C.J."/>
            <person name="Federspiel N.A."/>
            <person name="Kaul S."/>
            <person name="White O."/>
            <person name="Alonso J."/>
            <person name="Altafi H."/>
            <person name="Araujo R."/>
            <person name="Bowman C.L."/>
            <person name="Brooks S.Y."/>
            <person name="Buehler E."/>
            <person name="Chan A."/>
            <person name="Chao Q."/>
            <person name="Chen H."/>
            <person name="Cheuk R.F."/>
            <person name="Chin C.W."/>
            <person name="Chung M.K."/>
            <person name="Conn L."/>
            <person name="Conway A.B."/>
            <person name="Conway A.R."/>
            <person name="Creasy T.H."/>
            <person name="Dewar K."/>
            <person name="Dunn P."/>
            <person name="Etgu P."/>
            <person name="Feldblyum T.V."/>
            <person name="Feng J.-D."/>
            <person name="Fong B."/>
            <person name="Fujii C.Y."/>
            <person name="Gill J.E."/>
            <person name="Goldsmith A.D."/>
            <person name="Haas B."/>
            <person name="Hansen N.F."/>
            <person name="Hughes B."/>
            <person name="Huizar L."/>
            <person name="Hunter J.L."/>
            <person name="Jenkins J."/>
            <person name="Johnson-Hopson C."/>
            <person name="Khan S."/>
            <person name="Khaykin E."/>
            <person name="Kim C.J."/>
            <person name="Koo H.L."/>
            <person name="Kremenetskaia I."/>
            <person name="Kurtz D.B."/>
            <person name="Kwan A."/>
            <person name="Lam B."/>
            <person name="Langin-Hooper S."/>
            <person name="Lee A."/>
            <person name="Lee J.M."/>
            <person name="Lenz C.A."/>
            <person name="Li J.H."/>
            <person name="Li Y.-P."/>
            <person name="Lin X."/>
            <person name="Liu S.X."/>
            <person name="Liu Z.A."/>
            <person name="Luros J.S."/>
            <person name="Maiti R."/>
            <person name="Marziali A."/>
            <person name="Militscher J."/>
            <person name="Miranda M."/>
            <person name="Nguyen M."/>
            <person name="Nierman W.C."/>
            <person name="Osborne B.I."/>
            <person name="Pai G."/>
            <person name="Peterson J."/>
            <person name="Pham P.K."/>
            <person name="Rizzo M."/>
            <person name="Rooney T."/>
            <person name="Rowley D."/>
            <person name="Sakano H."/>
            <person name="Salzberg S.L."/>
            <person name="Schwartz J.R."/>
            <person name="Shinn P."/>
            <person name="Southwick A.M."/>
            <person name="Sun H."/>
            <person name="Tallon L.J."/>
            <person name="Tambunga G."/>
            <person name="Toriumi M.J."/>
            <person name="Town C.D."/>
            <person name="Utterback T."/>
            <person name="Van Aken S."/>
            <person name="Vaysberg M."/>
            <person name="Vysotskaia V.S."/>
            <person name="Walker M."/>
            <person name="Wu D."/>
            <person name="Yu G."/>
            <person name="Fraser C.M."/>
            <person name="Venter J.C."/>
            <person name="Davis R.W."/>
        </authorList>
    </citation>
    <scope>NUCLEOTIDE SEQUENCE [LARGE SCALE GENOMIC DNA]</scope>
    <source>
        <strain>cv. Columbia</strain>
    </source>
</reference>
<reference key="2">
    <citation type="journal article" date="2017" name="Plant J.">
        <title>Araport11: a complete reannotation of the Arabidopsis thaliana reference genome.</title>
        <authorList>
            <person name="Cheng C.Y."/>
            <person name="Krishnakumar V."/>
            <person name="Chan A.P."/>
            <person name="Thibaud-Nissen F."/>
            <person name="Schobel S."/>
            <person name="Town C.D."/>
        </authorList>
    </citation>
    <scope>GENOME REANNOTATION</scope>
    <source>
        <strain>cv. Columbia</strain>
    </source>
</reference>
<reference key="3">
    <citation type="journal article" date="2003" name="Science">
        <title>Empirical analysis of transcriptional activity in the Arabidopsis genome.</title>
        <authorList>
            <person name="Yamada K."/>
            <person name="Lim J."/>
            <person name="Dale J.M."/>
            <person name="Chen H."/>
            <person name="Shinn P."/>
            <person name="Palm C.J."/>
            <person name="Southwick A.M."/>
            <person name="Wu H.C."/>
            <person name="Kim C.J."/>
            <person name="Nguyen M."/>
            <person name="Pham P.K."/>
            <person name="Cheuk R.F."/>
            <person name="Karlin-Newmann G."/>
            <person name="Liu S.X."/>
            <person name="Lam B."/>
            <person name="Sakano H."/>
            <person name="Wu T."/>
            <person name="Yu G."/>
            <person name="Miranda M."/>
            <person name="Quach H.L."/>
            <person name="Tripp M."/>
            <person name="Chang C.H."/>
            <person name="Lee J.M."/>
            <person name="Toriumi M.J."/>
            <person name="Chan M.M."/>
            <person name="Tang C.C."/>
            <person name="Onodera C.S."/>
            <person name="Deng J.M."/>
            <person name="Akiyama K."/>
            <person name="Ansari Y."/>
            <person name="Arakawa T."/>
            <person name="Banh J."/>
            <person name="Banno F."/>
            <person name="Bowser L."/>
            <person name="Brooks S.Y."/>
            <person name="Carninci P."/>
            <person name="Chao Q."/>
            <person name="Choy N."/>
            <person name="Enju A."/>
            <person name="Goldsmith A.D."/>
            <person name="Gurjal M."/>
            <person name="Hansen N.F."/>
            <person name="Hayashizaki Y."/>
            <person name="Johnson-Hopson C."/>
            <person name="Hsuan V.W."/>
            <person name="Iida K."/>
            <person name="Karnes M."/>
            <person name="Khan S."/>
            <person name="Koesema E."/>
            <person name="Ishida J."/>
            <person name="Jiang P.X."/>
            <person name="Jones T."/>
            <person name="Kawai J."/>
            <person name="Kamiya A."/>
            <person name="Meyers C."/>
            <person name="Nakajima M."/>
            <person name="Narusaka M."/>
            <person name="Seki M."/>
            <person name="Sakurai T."/>
            <person name="Satou M."/>
            <person name="Tamse R."/>
            <person name="Vaysberg M."/>
            <person name="Wallender E.K."/>
            <person name="Wong C."/>
            <person name="Yamamura Y."/>
            <person name="Yuan S."/>
            <person name="Shinozaki K."/>
            <person name="Davis R.W."/>
            <person name="Theologis A."/>
            <person name="Ecker J.R."/>
        </authorList>
    </citation>
    <scope>NUCLEOTIDE SEQUENCE [LARGE SCALE MRNA]</scope>
    <source>
        <strain>cv. Columbia</strain>
    </source>
</reference>
<reference key="4">
    <citation type="journal article" date="2004" name="Plant Cell">
        <title>Genome-wide analysis of Arabidopsis pentatricopeptide repeat proteins reveals their essential role in organelle biogenesis.</title>
        <authorList>
            <person name="Lurin C."/>
            <person name="Andres C."/>
            <person name="Aubourg S."/>
            <person name="Bellaoui M."/>
            <person name="Bitton F."/>
            <person name="Bruyere C."/>
            <person name="Caboche M."/>
            <person name="Debast C."/>
            <person name="Gualberto J."/>
            <person name="Hoffmann B."/>
            <person name="Lecharny A."/>
            <person name="Le Ret M."/>
            <person name="Martin-Magniette M.-L."/>
            <person name="Mireau H."/>
            <person name="Peeters N."/>
            <person name="Renou J.-P."/>
            <person name="Szurek B."/>
            <person name="Taconnat L."/>
            <person name="Small I."/>
        </authorList>
    </citation>
    <scope>GENE FAMILY</scope>
</reference>
<organism>
    <name type="scientific">Arabidopsis thaliana</name>
    <name type="common">Mouse-ear cress</name>
    <dbReference type="NCBI Taxonomy" id="3702"/>
    <lineage>
        <taxon>Eukaryota</taxon>
        <taxon>Viridiplantae</taxon>
        <taxon>Streptophyta</taxon>
        <taxon>Embryophyta</taxon>
        <taxon>Tracheophyta</taxon>
        <taxon>Spermatophyta</taxon>
        <taxon>Magnoliopsida</taxon>
        <taxon>eudicotyledons</taxon>
        <taxon>Gunneridae</taxon>
        <taxon>Pentapetalae</taxon>
        <taxon>rosids</taxon>
        <taxon>malvids</taxon>
        <taxon>Brassicales</taxon>
        <taxon>Brassicaceae</taxon>
        <taxon>Camelineae</taxon>
        <taxon>Arabidopsis</taxon>
    </lineage>
</organism>
<proteinExistence type="evidence at transcript level"/>
<dbReference type="EMBL" id="AC022464">
    <property type="protein sequence ID" value="AAF79544.1"/>
    <property type="status" value="ALT_SEQ"/>
    <property type="molecule type" value="Genomic_DNA"/>
</dbReference>
<dbReference type="EMBL" id="CP002684">
    <property type="protein sequence ID" value="AEE28146.1"/>
    <property type="molecule type" value="Genomic_DNA"/>
</dbReference>
<dbReference type="EMBL" id="AY054199">
    <property type="protein sequence ID" value="AAL06860.1"/>
    <property type="molecule type" value="mRNA"/>
</dbReference>
<dbReference type="RefSeq" id="NP_172238.1">
    <property type="nucleotide sequence ID" value="NM_100632.3"/>
</dbReference>
<dbReference type="SMR" id="Q940Q2"/>
<dbReference type="BioGRID" id="22513">
    <property type="interactions" value="1"/>
</dbReference>
<dbReference type="FunCoup" id="Q940Q2">
    <property type="interactions" value="32"/>
</dbReference>
<dbReference type="STRING" id="3702.Q940Q2"/>
<dbReference type="PaxDb" id="3702-AT1G07590.1"/>
<dbReference type="ProteomicsDB" id="234892"/>
<dbReference type="EnsemblPlants" id="AT1G07590.1">
    <property type="protein sequence ID" value="AT1G07590.1"/>
    <property type="gene ID" value="AT1G07590"/>
</dbReference>
<dbReference type="GeneID" id="837272"/>
<dbReference type="Gramene" id="AT1G07590.1">
    <property type="protein sequence ID" value="AT1G07590.1"/>
    <property type="gene ID" value="AT1G07590"/>
</dbReference>
<dbReference type="KEGG" id="ath:AT1G07590"/>
<dbReference type="Araport" id="AT1G07590"/>
<dbReference type="TAIR" id="AT1G07590"/>
<dbReference type="eggNOG" id="KOG4197">
    <property type="taxonomic scope" value="Eukaryota"/>
</dbReference>
<dbReference type="HOGENOM" id="CLU_019802_4_0_1"/>
<dbReference type="InParanoid" id="Q940Q2"/>
<dbReference type="OMA" id="NAITFRH"/>
<dbReference type="OrthoDB" id="185373at2759"/>
<dbReference type="PhylomeDB" id="Q940Q2"/>
<dbReference type="PRO" id="PR:Q940Q2"/>
<dbReference type="Proteomes" id="UP000006548">
    <property type="component" value="Chromosome 1"/>
</dbReference>
<dbReference type="ExpressionAtlas" id="Q940Q2">
    <property type="expression patterns" value="baseline and differential"/>
</dbReference>
<dbReference type="GO" id="GO:0005739">
    <property type="term" value="C:mitochondrion"/>
    <property type="evidence" value="ECO:0007005"/>
    <property type="project" value="TAIR"/>
</dbReference>
<dbReference type="GO" id="GO:0003729">
    <property type="term" value="F:mRNA binding"/>
    <property type="evidence" value="ECO:0007669"/>
    <property type="project" value="UniProtKB-ARBA"/>
</dbReference>
<dbReference type="FunFam" id="1.25.40.10:FF:000799">
    <property type="entry name" value="Pentatricopeptide repeat-containing protein At1g07590, mitochondrial"/>
    <property type="match status" value="1"/>
</dbReference>
<dbReference type="FunFam" id="1.25.40.10:FF:002174">
    <property type="entry name" value="Pentatricopeptide repeat-containing protein mitochondrial"/>
    <property type="match status" value="1"/>
</dbReference>
<dbReference type="Gene3D" id="1.25.40.10">
    <property type="entry name" value="Tetratricopeptide repeat domain"/>
    <property type="match status" value="3"/>
</dbReference>
<dbReference type="InterPro" id="IPR002885">
    <property type="entry name" value="Pentatricopeptide_rpt"/>
</dbReference>
<dbReference type="InterPro" id="IPR011990">
    <property type="entry name" value="TPR-like_helical_dom_sf"/>
</dbReference>
<dbReference type="NCBIfam" id="TIGR00756">
    <property type="entry name" value="PPR"/>
    <property type="match status" value="1"/>
</dbReference>
<dbReference type="PANTHER" id="PTHR45717">
    <property type="entry name" value="OS12G0527900 PROTEIN"/>
    <property type="match status" value="1"/>
</dbReference>
<dbReference type="PANTHER" id="PTHR45717:SF11">
    <property type="entry name" value="PENTACOTRIPEPTIDE-REPEAT REGION OF PRORP DOMAIN-CONTAINING PROTEIN"/>
    <property type="match status" value="1"/>
</dbReference>
<dbReference type="Pfam" id="PF01535">
    <property type="entry name" value="PPR"/>
    <property type="match status" value="3"/>
</dbReference>
<dbReference type="Pfam" id="PF13041">
    <property type="entry name" value="PPR_2"/>
    <property type="match status" value="2"/>
</dbReference>
<dbReference type="PROSITE" id="PS51375">
    <property type="entry name" value="PPR"/>
    <property type="match status" value="6"/>
</dbReference>
<sequence length="534" mass="60849">MRSIIALMRQREYFVQAIRRTTCVASPALNQTNFQASSFLTTLISSKKSPEETCIGSEEEEEEPNKCLSLRIEKLPKGVTVGSALQSWMGDGFPVHGGDVYHAINRLRKLGRNKRALELMEWIIRERPYRLGELEYSYLLEFTVKLHGVSQGEKLFTRVPQEFQNELLYNNLVIACLDQGVIRLALEYMKKMRELGYRTSHLVYNRLIIRNSAPGRRKLIAKDLALMKADKATPHVSTYHILMKLEANEHNIDGVLKAFDGMKKAGVEPNEVSYCILAMAHAVARLYTVAEAYTEEIEKSITGDNWSTLDILMILYGRLGKEKELARTWNVIRGFHHVRSKSYLLATEAFARVGNLDRAEELWLEMKNVKGLKETEQFNSLLSVYCKDGLIEKAIGVFREMTGNGFKPNSITYRHLALGCAKAKLMKEALKNIEMGLNLKTSKSIGSSTPWLETTLSIIECFAEKGDVENSEKLFEEVKNAKYNRYAFVYNALFKAYVKAKVYDPNLFKRMVLGGARPDAESYSLLKLVEQYKP</sequence>
<protein>
    <recommendedName>
        <fullName>Pentatricopeptide repeat-containing protein At1g07590, mitochondrial</fullName>
    </recommendedName>
</protein>